<dbReference type="EMBL" id="CH408043">
    <property type="protein sequence ID" value="EDV07880.1"/>
    <property type="molecule type" value="Genomic_DNA"/>
</dbReference>
<dbReference type="HOGENOM" id="CLU_025391_0_0_1"/>
<dbReference type="OrthoDB" id="41314at4893"/>
<dbReference type="Proteomes" id="UP000008335">
    <property type="component" value="Unassembled WGS sequence"/>
</dbReference>
<dbReference type="GO" id="GO:0005634">
    <property type="term" value="C:nucleus"/>
    <property type="evidence" value="ECO:0007669"/>
    <property type="project" value="UniProtKB-SubCell"/>
</dbReference>
<dbReference type="GO" id="GO:0005886">
    <property type="term" value="C:plasma membrane"/>
    <property type="evidence" value="ECO:0007669"/>
    <property type="project" value="UniProtKB-SubCell"/>
</dbReference>
<dbReference type="GO" id="GO:0000981">
    <property type="term" value="F:DNA-binding transcription factor activity, RNA polymerase II-specific"/>
    <property type="evidence" value="ECO:0007669"/>
    <property type="project" value="TreeGrafter"/>
</dbReference>
<dbReference type="GO" id="GO:0000978">
    <property type="term" value="F:RNA polymerase II cis-regulatory region sequence-specific DNA binding"/>
    <property type="evidence" value="ECO:0007669"/>
    <property type="project" value="TreeGrafter"/>
</dbReference>
<dbReference type="GO" id="GO:0008270">
    <property type="term" value="F:zinc ion binding"/>
    <property type="evidence" value="ECO:0007669"/>
    <property type="project" value="UniProtKB-KW"/>
</dbReference>
<dbReference type="GO" id="GO:0008033">
    <property type="term" value="P:tRNA processing"/>
    <property type="evidence" value="ECO:0007669"/>
    <property type="project" value="UniProtKB-KW"/>
</dbReference>
<dbReference type="FunFam" id="3.30.160.60:FF:002194">
    <property type="entry name" value="STP1p Transcription factor"/>
    <property type="match status" value="1"/>
</dbReference>
<dbReference type="Gene3D" id="3.30.160.60">
    <property type="entry name" value="Classic Zinc Finger"/>
    <property type="match status" value="1"/>
</dbReference>
<dbReference type="InterPro" id="IPR051643">
    <property type="entry name" value="Transcr_Reg_ZincFinger"/>
</dbReference>
<dbReference type="InterPro" id="IPR036236">
    <property type="entry name" value="Znf_C2H2_sf"/>
</dbReference>
<dbReference type="InterPro" id="IPR013087">
    <property type="entry name" value="Znf_C2H2_type"/>
</dbReference>
<dbReference type="PANTHER" id="PTHR24396:SF19">
    <property type="entry name" value="FI01119P"/>
    <property type="match status" value="1"/>
</dbReference>
<dbReference type="PANTHER" id="PTHR24396">
    <property type="entry name" value="ZINC FINGER PROTEIN"/>
    <property type="match status" value="1"/>
</dbReference>
<dbReference type="SMART" id="SM00355">
    <property type="entry name" value="ZnF_C2H2"/>
    <property type="match status" value="2"/>
</dbReference>
<dbReference type="SUPFAM" id="SSF57667">
    <property type="entry name" value="beta-beta-alpha zinc fingers"/>
    <property type="match status" value="1"/>
</dbReference>
<dbReference type="PROSITE" id="PS00028">
    <property type="entry name" value="ZINC_FINGER_C2H2_1"/>
    <property type="match status" value="1"/>
</dbReference>
<dbReference type="PROSITE" id="PS50157">
    <property type="entry name" value="ZINC_FINGER_C2H2_2"/>
    <property type="match status" value="1"/>
</dbReference>
<comment type="function">
    <text evidence="1">Transcription factor involved in the regulation of gene expression in response to extracellular amino acid levels. Synthesized as latent cytoplasmic precursor, which, upon a signal initiated by the plasma membrane SPS (SSY1-PTR3-SSY5) amino acid sensor system, becomes proteolytically activated and relocates to the nucleus, where it induces the expression of SPS-sensor-regulated genes, including the amino-acid permeases AGP1, BAP2, BAP3 and GNP1. Binding to promoters is facilitated by DAL81. Involved in the repression of genes subject to nitrogen catabolite repression and genes involved in stress response. Negatively regulated by inner nuclear membrane proteins ASI1, ASI2 and ASI3, which prevent unprocessed precursor forms that escape cytoplasmic anchoring from inducing SPS-sensor-regulated genes. May be involved in pre-tRNA splicing (By similarity).</text>
</comment>
<comment type="subunit">
    <text evidence="1">Interacts (via Region II) with SSY5; protease component of the SPS-sensor.</text>
</comment>
<comment type="subcellular location">
    <subcellularLocation>
        <location evidence="1">Cell membrane</location>
        <topology evidence="1">Peripheral membrane protein</topology>
        <orientation evidence="1">Cytoplasmic side</orientation>
    </subcellularLocation>
    <subcellularLocation>
        <location evidence="1">Nucleus</location>
    </subcellularLocation>
    <text evidence="1">Localizes to the cytoplasm in its unprocessed form and is targeted to the nucleus after proteolytic processing upon induction by amino acids. The SCF(MET30) ubiquitin ligase complex negatively regulates nuclear accumulation of the processed form in the absence of high extracellular methionine levels (By similarity).</text>
</comment>
<comment type="domain">
    <text evidence="1">The N-terminal inhibitory domain contains conserved sequence elements important for cytoplasmic retention (Region I) and proteolytic processing (Region II) of the protein. Region I is also required for ASI1/2/3-mediated negative regulation of transcription (By similarity).</text>
</comment>
<comment type="PTM">
    <text evidence="1">Phosphorylated by casein kinase I. Phosphorylation is not dependent on the extracellular amino acid levels, but is a prerequisite for proteolytic processing (By similarity).</text>
</comment>
<comment type="PTM">
    <text evidence="1">Activated by the amino acid-induced proteolytic removal of an N-terminal inhibitory domain by serine protease SSY5, an intrinsic component of the SPS-sensor. Processing requires at least 2 components of the SCF(GRR1) ubiquitin ligase complex, namely the F-box protein GRR1 and the E2 enzyme CDC34, but does not depend on the proteasome. Processing is negatively regulated by the protein phosphatase 2A regulatory subunit RTS1 (By similarity).</text>
</comment>
<keyword id="KW-1003">Cell membrane</keyword>
<keyword id="KW-0238">DNA-binding</keyword>
<keyword id="KW-0472">Membrane</keyword>
<keyword id="KW-0479">Metal-binding</keyword>
<keyword id="KW-0539">Nucleus</keyword>
<keyword id="KW-0597">Phosphoprotein</keyword>
<keyword id="KW-0677">Repeat</keyword>
<keyword id="KW-0819">tRNA processing</keyword>
<keyword id="KW-0862">Zinc</keyword>
<keyword id="KW-0863">Zinc-finger</keyword>
<keyword id="KW-0865">Zymogen</keyword>
<protein>
    <recommendedName>
        <fullName>Transcription factor STP1</fullName>
    </recommendedName>
</protein>
<name>STP1_YEAS1</name>
<feature type="propeptide" id="PRO_0000377643">
    <location>
        <begin position="1"/>
        <end status="unknown"/>
    </location>
</feature>
<feature type="chain" id="PRO_0000377644" description="Transcription factor STP1">
    <location>
        <begin status="unknown"/>
        <end position="519"/>
    </location>
</feature>
<feature type="zinc finger region" description="C2H2-type 1" evidence="2">
    <location>
        <begin position="160"/>
        <end position="182"/>
    </location>
</feature>
<feature type="zinc finger region" description="C2H2-type 2; atypical" evidence="2">
    <location>
        <begin position="188"/>
        <end position="223"/>
    </location>
</feature>
<feature type="zinc finger region" description="C2H2-type 3; atypical" evidence="2">
    <location>
        <begin position="240"/>
        <end position="265"/>
    </location>
</feature>
<feature type="region of interest" description="I">
    <location>
        <begin position="16"/>
        <end position="35"/>
    </location>
</feature>
<feature type="region of interest" description="Disordered" evidence="3">
    <location>
        <begin position="47"/>
        <end position="69"/>
    </location>
</feature>
<feature type="region of interest" description="II">
    <location>
        <begin position="65"/>
        <end position="97"/>
    </location>
</feature>
<feature type="region of interest" description="Disordered" evidence="3">
    <location>
        <begin position="115"/>
        <end position="150"/>
    </location>
</feature>
<feature type="region of interest" description="Disordered" evidence="3">
    <location>
        <begin position="357"/>
        <end position="382"/>
    </location>
</feature>
<feature type="compositionally biased region" description="Basic and acidic residues" evidence="3">
    <location>
        <begin position="47"/>
        <end position="61"/>
    </location>
</feature>
<feature type="compositionally biased region" description="Low complexity" evidence="3">
    <location>
        <begin position="131"/>
        <end position="146"/>
    </location>
</feature>
<feature type="compositionally biased region" description="Polar residues" evidence="3">
    <location>
        <begin position="364"/>
        <end position="381"/>
    </location>
</feature>
<evidence type="ECO:0000250" key="1"/>
<evidence type="ECO:0000255" key="2">
    <source>
        <dbReference type="PROSITE-ProRule" id="PRU00042"/>
    </source>
</evidence>
<evidence type="ECO:0000256" key="3">
    <source>
        <dbReference type="SAM" id="MobiDB-lite"/>
    </source>
</evidence>
<accession>B3LFK1</accession>
<sequence>MPSTTLLFPQKHIRAIPGKIYAFFRELVSGVIISKPDLSHHYSCENATKEEGKDAADEEKTTTSLFPESNNIDRSLNGGCSVIPCSMDVSDLNTPISITLSPENRIKSEVNAKSLLGSRPEQDTGAPIKMSTGVTSSPLSPSGSTPEHSTKVLNNGEEEFICHYCDATFRIRGYLTRHIKKHAIEKAYHCPFFNSATPPDLRCHNSGGFSRRDTYKTHLKARHVLYPKGVKPQDRNKSSGHCAQCGEYFSTIENFVENHIESGDCKALPQGYTKKNEKRSGKLRKIKTSNGHSRFISTSQSVVEPKVLFNKDAVEAMTIVANNSSGNDIISKYGNNKLMLNSENFKVDIPKRKRKYIKKKQQQVSGSTVTTPEVATQNNQEVAPDEISSATIFSPFDTHLLEPVPSSSSESSAEVMFHGKQMKNFLIDINSFTNQQQQAQDNPSFLPLDIEQSSYDLSEDAMSYPIISTQSNRDCTQYDNTKISQILQSQLNPEYLSENHMRETQQYLNFYNDNFGSQF</sequence>
<gene>
    <name type="primary">STP1</name>
    <name type="ORF">SCRG_00076</name>
</gene>
<organism>
    <name type="scientific">Saccharomyces cerevisiae (strain RM11-1a)</name>
    <name type="common">Baker's yeast</name>
    <dbReference type="NCBI Taxonomy" id="285006"/>
    <lineage>
        <taxon>Eukaryota</taxon>
        <taxon>Fungi</taxon>
        <taxon>Dikarya</taxon>
        <taxon>Ascomycota</taxon>
        <taxon>Saccharomycotina</taxon>
        <taxon>Saccharomycetes</taxon>
        <taxon>Saccharomycetales</taxon>
        <taxon>Saccharomycetaceae</taxon>
        <taxon>Saccharomyces</taxon>
    </lineage>
</organism>
<proteinExistence type="inferred from homology"/>
<reference key="1">
    <citation type="submission" date="2005-03" db="EMBL/GenBank/DDBJ databases">
        <title>Annotation of the Saccharomyces cerevisiae RM11-1a genome.</title>
        <authorList>
            <consortium name="The Broad Institute Genome Sequencing Platform"/>
            <person name="Birren B.W."/>
            <person name="Lander E.S."/>
            <person name="Galagan J.E."/>
            <person name="Nusbaum C."/>
            <person name="Devon K."/>
            <person name="Cuomo C."/>
            <person name="Jaffe D.B."/>
            <person name="Butler J."/>
            <person name="Alvarez P."/>
            <person name="Gnerre S."/>
            <person name="Grabherr M."/>
            <person name="Kleber M."/>
            <person name="Mauceli E.W."/>
            <person name="Brockman W."/>
            <person name="MacCallum I.A."/>
            <person name="Rounsley S."/>
            <person name="Young S.K."/>
            <person name="LaButti K."/>
            <person name="Pushparaj V."/>
            <person name="DeCaprio D."/>
            <person name="Crawford M."/>
            <person name="Koehrsen M."/>
            <person name="Engels R."/>
            <person name="Montgomery P."/>
            <person name="Pearson M."/>
            <person name="Howarth C."/>
            <person name="Larson L."/>
            <person name="Luoma S."/>
            <person name="White J."/>
            <person name="O'Leary S."/>
            <person name="Kodira C.D."/>
            <person name="Zeng Q."/>
            <person name="Yandava C."/>
            <person name="Alvarado L."/>
            <person name="Pratt S."/>
            <person name="Kruglyak L."/>
        </authorList>
    </citation>
    <scope>NUCLEOTIDE SEQUENCE [LARGE SCALE GENOMIC DNA]</scope>
    <source>
        <strain>RM11-1a</strain>
    </source>
</reference>